<evidence type="ECO:0000255" key="1">
    <source>
        <dbReference type="HAMAP-Rule" id="MF_01576"/>
    </source>
</evidence>
<dbReference type="EC" id="1.5.1.5" evidence="1"/>
<dbReference type="EC" id="3.5.4.9" evidence="1"/>
<dbReference type="EMBL" id="AE017245">
    <property type="protein sequence ID" value="AAZ43710.1"/>
    <property type="molecule type" value="Genomic_DNA"/>
</dbReference>
<dbReference type="RefSeq" id="WP_011283442.1">
    <property type="nucleotide sequence ID" value="NC_007294.1"/>
</dbReference>
<dbReference type="SMR" id="Q4A6B1"/>
<dbReference type="STRING" id="262723.MS53_0297"/>
<dbReference type="KEGG" id="msy:MS53_0297"/>
<dbReference type="eggNOG" id="COG0190">
    <property type="taxonomic scope" value="Bacteria"/>
</dbReference>
<dbReference type="HOGENOM" id="CLU_034045_2_0_14"/>
<dbReference type="OrthoDB" id="9803580at2"/>
<dbReference type="UniPathway" id="UPA00193"/>
<dbReference type="Proteomes" id="UP000000549">
    <property type="component" value="Chromosome"/>
</dbReference>
<dbReference type="GO" id="GO:0005829">
    <property type="term" value="C:cytosol"/>
    <property type="evidence" value="ECO:0007669"/>
    <property type="project" value="TreeGrafter"/>
</dbReference>
<dbReference type="GO" id="GO:0004477">
    <property type="term" value="F:methenyltetrahydrofolate cyclohydrolase activity"/>
    <property type="evidence" value="ECO:0007669"/>
    <property type="project" value="UniProtKB-UniRule"/>
</dbReference>
<dbReference type="GO" id="GO:0004488">
    <property type="term" value="F:methylenetetrahydrofolate dehydrogenase (NADP+) activity"/>
    <property type="evidence" value="ECO:0007669"/>
    <property type="project" value="UniProtKB-UniRule"/>
</dbReference>
<dbReference type="GO" id="GO:0000105">
    <property type="term" value="P:L-histidine biosynthetic process"/>
    <property type="evidence" value="ECO:0007669"/>
    <property type="project" value="UniProtKB-KW"/>
</dbReference>
<dbReference type="GO" id="GO:0009086">
    <property type="term" value="P:methionine biosynthetic process"/>
    <property type="evidence" value="ECO:0007669"/>
    <property type="project" value="UniProtKB-KW"/>
</dbReference>
<dbReference type="GO" id="GO:0006164">
    <property type="term" value="P:purine nucleotide biosynthetic process"/>
    <property type="evidence" value="ECO:0007669"/>
    <property type="project" value="UniProtKB-KW"/>
</dbReference>
<dbReference type="GO" id="GO:0035999">
    <property type="term" value="P:tetrahydrofolate interconversion"/>
    <property type="evidence" value="ECO:0007669"/>
    <property type="project" value="UniProtKB-UniRule"/>
</dbReference>
<dbReference type="CDD" id="cd01080">
    <property type="entry name" value="NAD_bind_m-THF_DH_Cyclohyd"/>
    <property type="match status" value="1"/>
</dbReference>
<dbReference type="FunFam" id="3.40.50.10860:FF:000005">
    <property type="entry name" value="C-1-tetrahydrofolate synthase, cytoplasmic, putative"/>
    <property type="match status" value="1"/>
</dbReference>
<dbReference type="Gene3D" id="3.40.50.10860">
    <property type="entry name" value="Leucine Dehydrogenase, chain A, domain 1"/>
    <property type="match status" value="1"/>
</dbReference>
<dbReference type="Gene3D" id="3.40.50.720">
    <property type="entry name" value="NAD(P)-binding Rossmann-like Domain"/>
    <property type="match status" value="1"/>
</dbReference>
<dbReference type="HAMAP" id="MF_01576">
    <property type="entry name" value="THF_DHG_CYH"/>
    <property type="match status" value="1"/>
</dbReference>
<dbReference type="InterPro" id="IPR046346">
    <property type="entry name" value="Aminoacid_DH-like_N_sf"/>
</dbReference>
<dbReference type="InterPro" id="IPR036291">
    <property type="entry name" value="NAD(P)-bd_dom_sf"/>
</dbReference>
<dbReference type="InterPro" id="IPR000672">
    <property type="entry name" value="THF_DH/CycHdrlase"/>
</dbReference>
<dbReference type="InterPro" id="IPR020630">
    <property type="entry name" value="THF_DH/CycHdrlase_cat_dom"/>
</dbReference>
<dbReference type="InterPro" id="IPR020631">
    <property type="entry name" value="THF_DH/CycHdrlase_NAD-bd_dom"/>
</dbReference>
<dbReference type="PANTHER" id="PTHR48099:SF5">
    <property type="entry name" value="C-1-TETRAHYDROFOLATE SYNTHASE, CYTOPLASMIC"/>
    <property type="match status" value="1"/>
</dbReference>
<dbReference type="PANTHER" id="PTHR48099">
    <property type="entry name" value="C-1-TETRAHYDROFOLATE SYNTHASE, CYTOPLASMIC-RELATED"/>
    <property type="match status" value="1"/>
</dbReference>
<dbReference type="Pfam" id="PF00763">
    <property type="entry name" value="THF_DHG_CYH"/>
    <property type="match status" value="1"/>
</dbReference>
<dbReference type="Pfam" id="PF02882">
    <property type="entry name" value="THF_DHG_CYH_C"/>
    <property type="match status" value="1"/>
</dbReference>
<dbReference type="PRINTS" id="PR00085">
    <property type="entry name" value="THFDHDRGNASE"/>
</dbReference>
<dbReference type="SUPFAM" id="SSF53223">
    <property type="entry name" value="Aminoacid dehydrogenase-like, N-terminal domain"/>
    <property type="match status" value="1"/>
</dbReference>
<dbReference type="SUPFAM" id="SSF51735">
    <property type="entry name" value="NAD(P)-binding Rossmann-fold domains"/>
    <property type="match status" value="1"/>
</dbReference>
<name>FOLD_MYCS5</name>
<keyword id="KW-0028">Amino-acid biosynthesis</keyword>
<keyword id="KW-0368">Histidine biosynthesis</keyword>
<keyword id="KW-0378">Hydrolase</keyword>
<keyword id="KW-0486">Methionine biosynthesis</keyword>
<keyword id="KW-0511">Multifunctional enzyme</keyword>
<keyword id="KW-0521">NADP</keyword>
<keyword id="KW-0554">One-carbon metabolism</keyword>
<keyword id="KW-0560">Oxidoreductase</keyword>
<keyword id="KW-0658">Purine biosynthesis</keyword>
<keyword id="KW-1185">Reference proteome</keyword>
<comment type="function">
    <text evidence="1">Catalyzes the oxidation of 5,10-methylenetetrahydrofolate to 5,10-methenyltetrahydrofolate and then the hydrolysis of 5,10-methenyltetrahydrofolate to 10-formyltetrahydrofolate.</text>
</comment>
<comment type="catalytic activity">
    <reaction evidence="1">
        <text>(6R)-5,10-methylene-5,6,7,8-tetrahydrofolate + NADP(+) = (6R)-5,10-methenyltetrahydrofolate + NADPH</text>
        <dbReference type="Rhea" id="RHEA:22812"/>
        <dbReference type="ChEBI" id="CHEBI:15636"/>
        <dbReference type="ChEBI" id="CHEBI:57455"/>
        <dbReference type="ChEBI" id="CHEBI:57783"/>
        <dbReference type="ChEBI" id="CHEBI:58349"/>
        <dbReference type="EC" id="1.5.1.5"/>
    </reaction>
</comment>
<comment type="catalytic activity">
    <reaction evidence="1">
        <text>(6R)-5,10-methenyltetrahydrofolate + H2O = (6R)-10-formyltetrahydrofolate + H(+)</text>
        <dbReference type="Rhea" id="RHEA:23700"/>
        <dbReference type="ChEBI" id="CHEBI:15377"/>
        <dbReference type="ChEBI" id="CHEBI:15378"/>
        <dbReference type="ChEBI" id="CHEBI:57455"/>
        <dbReference type="ChEBI" id="CHEBI:195366"/>
        <dbReference type="EC" id="3.5.4.9"/>
    </reaction>
</comment>
<comment type="pathway">
    <text evidence="1">One-carbon metabolism; tetrahydrofolate interconversion.</text>
</comment>
<comment type="subunit">
    <text evidence="1">Homodimer.</text>
</comment>
<comment type="similarity">
    <text evidence="1">Belongs to the tetrahydrofolate dehydrogenase/cyclohydrolase family.</text>
</comment>
<sequence>MKILSGREKAEQDLKQLKKELDELNLNRPIKLAIIQVGDKMESNRYVEQKLKKAKEIGIEAKCFKFDENITQKRLLLAMDEINENWDGILIQLPLPKHLPKEVILDAVPYEKDIDGLSHRNEFILYNEKNSDDKFFVPAAARAVLELIEHHEINYKKKKVAVVGRSHLVGKPVAHILKRRGASVSTFDENTPIKLVASADIVIVAIGVPKYIKAENIKQGAIIIDVGTNYDQNDPSVIFGDVDHESVKTKASAITPVPGGVGPLTVVCLLKNLVEIYK</sequence>
<reference key="1">
    <citation type="journal article" date="2005" name="J. Bacteriol.">
        <title>Swine and poultry pathogens: the complete genome sequences of two strains of Mycoplasma hyopneumoniae and a strain of Mycoplasma synoviae.</title>
        <authorList>
            <person name="Vasconcelos A.T.R."/>
            <person name="Ferreira H.B."/>
            <person name="Bizarro C.V."/>
            <person name="Bonatto S.L."/>
            <person name="Carvalho M.O."/>
            <person name="Pinto P.M."/>
            <person name="Almeida D.F."/>
            <person name="Almeida L.G.P."/>
            <person name="Almeida R."/>
            <person name="Alves-Junior L."/>
            <person name="Assuncao E.N."/>
            <person name="Azevedo V.A.C."/>
            <person name="Bogo M.R."/>
            <person name="Brigido M.M."/>
            <person name="Brocchi M."/>
            <person name="Burity H.A."/>
            <person name="Camargo A.A."/>
            <person name="Camargo S.S."/>
            <person name="Carepo M.S."/>
            <person name="Carraro D.M."/>
            <person name="de Mattos Cascardo J.C."/>
            <person name="Castro L.A."/>
            <person name="Cavalcanti G."/>
            <person name="Chemale G."/>
            <person name="Collevatti R.G."/>
            <person name="Cunha C.W."/>
            <person name="Dallagiovanna B."/>
            <person name="Dambros B.P."/>
            <person name="Dellagostin O.A."/>
            <person name="Falcao C."/>
            <person name="Fantinatti-Garboggini F."/>
            <person name="Felipe M.S.S."/>
            <person name="Fiorentin L."/>
            <person name="Franco G.R."/>
            <person name="Freitas N.S.A."/>
            <person name="Frias D."/>
            <person name="Grangeiro T.B."/>
            <person name="Grisard E.C."/>
            <person name="Guimaraes C.T."/>
            <person name="Hungria M."/>
            <person name="Jardim S.N."/>
            <person name="Krieger M.A."/>
            <person name="Laurino J.P."/>
            <person name="Lima L.F.A."/>
            <person name="Lopes M.I."/>
            <person name="Loreto E.L.S."/>
            <person name="Madeira H.M.F."/>
            <person name="Manfio G.P."/>
            <person name="Maranhao A.Q."/>
            <person name="Martinkovics C.T."/>
            <person name="Medeiros S.R.B."/>
            <person name="Moreira M.A.M."/>
            <person name="Neiva M."/>
            <person name="Ramalho-Neto C.E."/>
            <person name="Nicolas M.F."/>
            <person name="Oliveira S.C."/>
            <person name="Paixao R.F.C."/>
            <person name="Pedrosa F.O."/>
            <person name="Pena S.D.J."/>
            <person name="Pereira M."/>
            <person name="Pereira-Ferrari L."/>
            <person name="Piffer I."/>
            <person name="Pinto L.S."/>
            <person name="Potrich D.P."/>
            <person name="Salim A.C.M."/>
            <person name="Santos F.R."/>
            <person name="Schmitt R."/>
            <person name="Schneider M.P.C."/>
            <person name="Schrank A."/>
            <person name="Schrank I.S."/>
            <person name="Schuck A.F."/>
            <person name="Seuanez H.N."/>
            <person name="Silva D.W."/>
            <person name="Silva R."/>
            <person name="Silva S.C."/>
            <person name="Soares C.M.A."/>
            <person name="Souza K.R.L."/>
            <person name="Souza R.C."/>
            <person name="Staats C.C."/>
            <person name="Steffens M.B.R."/>
            <person name="Teixeira S.M.R."/>
            <person name="Urmenyi T.P."/>
            <person name="Vainstein M.H."/>
            <person name="Zuccherato L.W."/>
            <person name="Simpson A.J.G."/>
            <person name="Zaha A."/>
        </authorList>
    </citation>
    <scope>NUCLEOTIDE SEQUENCE [LARGE SCALE GENOMIC DNA]</scope>
    <source>
        <strain>53</strain>
    </source>
</reference>
<feature type="chain" id="PRO_0000268411" description="Bifunctional protein FolD">
    <location>
        <begin position="1"/>
        <end position="278"/>
    </location>
</feature>
<feature type="binding site" evidence="1">
    <location>
        <begin position="164"/>
        <end position="166"/>
    </location>
    <ligand>
        <name>NADP(+)</name>
        <dbReference type="ChEBI" id="CHEBI:58349"/>
    </ligand>
</feature>
<feature type="binding site" evidence="1">
    <location>
        <position position="228"/>
    </location>
    <ligand>
        <name>NADP(+)</name>
        <dbReference type="ChEBI" id="CHEBI:58349"/>
    </ligand>
</feature>
<protein>
    <recommendedName>
        <fullName evidence="1">Bifunctional protein FolD</fullName>
    </recommendedName>
    <domain>
        <recommendedName>
            <fullName evidence="1">Methylenetetrahydrofolate dehydrogenase</fullName>
            <ecNumber evidence="1">1.5.1.5</ecNumber>
        </recommendedName>
    </domain>
    <domain>
        <recommendedName>
            <fullName evidence="1">Methenyltetrahydrofolate cyclohydrolase</fullName>
            <ecNumber evidence="1">3.5.4.9</ecNumber>
        </recommendedName>
    </domain>
</protein>
<proteinExistence type="inferred from homology"/>
<accession>Q4A6B1</accession>
<gene>
    <name evidence="1" type="primary">folD</name>
    <name type="ordered locus">MS53_0297</name>
</gene>
<organism>
    <name type="scientific">Mycoplasmopsis synoviae (strain 53)</name>
    <name type="common">Mycoplasma synoviae</name>
    <dbReference type="NCBI Taxonomy" id="262723"/>
    <lineage>
        <taxon>Bacteria</taxon>
        <taxon>Bacillati</taxon>
        <taxon>Mycoplasmatota</taxon>
        <taxon>Mycoplasmoidales</taxon>
        <taxon>Metamycoplasmataceae</taxon>
        <taxon>Mycoplasmopsis</taxon>
    </lineage>
</organism>